<name>METK_METMI</name>
<dbReference type="EC" id="2.5.1.6" evidence="1"/>
<dbReference type="EMBL" id="AF295044">
    <property type="protein sequence ID" value="AAG02233.1"/>
    <property type="molecule type" value="Genomic_DNA"/>
</dbReference>
<dbReference type="SMR" id="P0CW62"/>
<dbReference type="UniPathway" id="UPA00315">
    <property type="reaction ID" value="UER00080"/>
</dbReference>
<dbReference type="GO" id="GO:0005524">
    <property type="term" value="F:ATP binding"/>
    <property type="evidence" value="ECO:0007669"/>
    <property type="project" value="UniProtKB-UniRule"/>
</dbReference>
<dbReference type="GO" id="GO:0000287">
    <property type="term" value="F:magnesium ion binding"/>
    <property type="evidence" value="ECO:0007669"/>
    <property type="project" value="UniProtKB-UniRule"/>
</dbReference>
<dbReference type="GO" id="GO:0004478">
    <property type="term" value="F:methionine adenosyltransferase activity"/>
    <property type="evidence" value="ECO:0007669"/>
    <property type="project" value="UniProtKB-UniRule"/>
</dbReference>
<dbReference type="GO" id="GO:0006730">
    <property type="term" value="P:one-carbon metabolic process"/>
    <property type="evidence" value="ECO:0007669"/>
    <property type="project" value="UniProtKB-KW"/>
</dbReference>
<dbReference type="GO" id="GO:0006556">
    <property type="term" value="P:S-adenosylmethionine biosynthetic process"/>
    <property type="evidence" value="ECO:0007669"/>
    <property type="project" value="UniProtKB-UniRule"/>
</dbReference>
<dbReference type="Gene3D" id="3.30.300.10">
    <property type="match status" value="1"/>
</dbReference>
<dbReference type="Gene3D" id="3.30.300.280">
    <property type="entry name" value="S-adenosylmethionine synthetase, C-terminal domain"/>
    <property type="match status" value="2"/>
</dbReference>
<dbReference type="HAMAP" id="MF_00136">
    <property type="entry name" value="S_AdoMet_synth2"/>
    <property type="match status" value="1"/>
</dbReference>
<dbReference type="InterPro" id="IPR027790">
    <property type="entry name" value="AdoMet_synthase_2_family"/>
</dbReference>
<dbReference type="InterPro" id="IPR042544">
    <property type="entry name" value="AdoMet_synthase_3"/>
</dbReference>
<dbReference type="InterPro" id="IPR002795">
    <property type="entry name" value="S-AdoMet_synthetase_arc"/>
</dbReference>
<dbReference type="NCBIfam" id="NF003364">
    <property type="entry name" value="PRK04439.1-3"/>
    <property type="match status" value="1"/>
</dbReference>
<dbReference type="NCBIfam" id="NF003366">
    <property type="entry name" value="PRK04439.1-5"/>
    <property type="match status" value="1"/>
</dbReference>
<dbReference type="PANTHER" id="PTHR36697">
    <property type="entry name" value="S-ADENOSYLMETHIONINE SYNTHASE"/>
    <property type="match status" value="1"/>
</dbReference>
<dbReference type="PANTHER" id="PTHR36697:SF1">
    <property type="entry name" value="S-ADENOSYLMETHIONINE SYNTHASE"/>
    <property type="match status" value="1"/>
</dbReference>
<dbReference type="Pfam" id="PF01941">
    <property type="entry name" value="AdoMet_Synthase"/>
    <property type="match status" value="1"/>
</dbReference>
<organism>
    <name type="scientific">Methanococcus maripaludis</name>
    <name type="common">Methanococcus deltae</name>
    <dbReference type="NCBI Taxonomy" id="39152"/>
    <lineage>
        <taxon>Archaea</taxon>
        <taxon>Methanobacteriati</taxon>
        <taxon>Methanobacteriota</taxon>
        <taxon>Methanomada group</taxon>
        <taxon>Methanococci</taxon>
        <taxon>Methanococcales</taxon>
        <taxon>Methanococcaceae</taxon>
        <taxon>Methanococcus</taxon>
    </lineage>
</organism>
<gene>
    <name evidence="1" type="primary">mat</name>
</gene>
<accession>P0CW62</accession>
<accession>Q9HHD2</accession>
<reference key="1">
    <citation type="journal article" date="2000" name="J. Biol. Chem.">
        <title>Identification of a highly diverged class of S-adenosylmethionine synthetases in the archaea.</title>
        <authorList>
            <person name="Graham D.E."/>
            <person name="Bock C.L."/>
            <person name="Schalk-Hihi C."/>
            <person name="Lu Z.J."/>
            <person name="Markham G.D."/>
        </authorList>
    </citation>
    <scope>NUCLEOTIDE SEQUENCE [GENOMIC DNA]</scope>
    <source>
        <strain>ATCC 43000 / DSM 2067 / JCM 10722 / JJ</strain>
    </source>
</reference>
<comment type="function">
    <text evidence="1">Catalyzes the formation of S-adenosylmethionine from methionine and ATP.</text>
</comment>
<comment type="catalytic activity">
    <reaction evidence="1">
        <text>L-methionine + ATP + H2O = S-adenosyl-L-methionine + phosphate + diphosphate</text>
        <dbReference type="Rhea" id="RHEA:21080"/>
        <dbReference type="ChEBI" id="CHEBI:15377"/>
        <dbReference type="ChEBI" id="CHEBI:30616"/>
        <dbReference type="ChEBI" id="CHEBI:33019"/>
        <dbReference type="ChEBI" id="CHEBI:43474"/>
        <dbReference type="ChEBI" id="CHEBI:57844"/>
        <dbReference type="ChEBI" id="CHEBI:59789"/>
        <dbReference type="EC" id="2.5.1.6"/>
    </reaction>
</comment>
<comment type="cofactor">
    <cofactor evidence="1">
        <name>Mg(2+)</name>
        <dbReference type="ChEBI" id="CHEBI:18420"/>
    </cofactor>
</comment>
<comment type="pathway">
    <text evidence="1">Amino-acid biosynthesis; S-adenosyl-L-methionine biosynthesis; S-adenosyl-L-methionine from L-methionine: step 1/1.</text>
</comment>
<comment type="similarity">
    <text evidence="1">Belongs to the AdoMet synthase 2 family.</text>
</comment>
<proteinExistence type="inferred from homology"/>
<keyword id="KW-0067">ATP-binding</keyword>
<keyword id="KW-0460">Magnesium</keyword>
<keyword id="KW-0547">Nucleotide-binding</keyword>
<keyword id="KW-0554">One-carbon metabolism</keyword>
<keyword id="KW-0808">Transferase</keyword>
<feature type="chain" id="PRO_0000150031" description="S-adenosylmethionine synthase">
    <location>
        <begin position="1"/>
        <end position="405"/>
    </location>
</feature>
<feature type="binding site" evidence="1">
    <location>
        <begin position="141"/>
        <end position="146"/>
    </location>
    <ligand>
        <name>ATP</name>
        <dbReference type="ChEBI" id="CHEBI:30616"/>
    </ligand>
</feature>
<protein>
    <recommendedName>
        <fullName evidence="1">S-adenosylmethionine synthase</fullName>
        <shortName evidence="1">AdoMet synthase</shortName>
        <ecNumber evidence="1">2.5.1.6</ecNumber>
    </recommendedName>
    <alternativeName>
        <fullName evidence="1">Methionine adenosyltransferase</fullName>
    </alternativeName>
</protein>
<evidence type="ECO:0000255" key="1">
    <source>
        <dbReference type="HAMAP-Rule" id="MF_00136"/>
    </source>
</evidence>
<sequence length="405" mass="44281">MANIVVKRLERTPIDEIPVEIVERKGIGHPDSICDGIAESVSVALCKMYKEKMGVVLHHNTDQVELVGGYAYLELGGGCMVSPIYILLSGRATMEVLDKETGKIIKLPVNTTAVNAARDYLKKALRNMDLEKDVVVDCRIGQGSVDLVEVFDRKRTEIPHANDTSFGVGHAPLSTTEKIVLETEKLLNSDALKAEIPAVGEDIKVMGLREGKKITLTIAMAAVDKYVNSCADYVNVKELAKAKVEENAKKYLDGHELEVCINTADDDEDCIFLTVTGTSAEMGDDGSVGRGNRANGLITPFRPMSMEATSGKNPITHIGKIYNILSNIIAEDVAKIEGVRECQIRILSQIGKPVTEPKILDIEMIPENGFELEELSPKAKEVAQKWLDNISEVTERIVSGNVTTF</sequence>